<proteinExistence type="evidence at protein level"/>
<organism>
    <name type="scientific">Nostoc sp. (strain PCC 7120 / SAG 25.82 / UTEX 2576)</name>
    <dbReference type="NCBI Taxonomy" id="103690"/>
    <lineage>
        <taxon>Bacteria</taxon>
        <taxon>Bacillati</taxon>
        <taxon>Cyanobacteriota</taxon>
        <taxon>Cyanophyceae</taxon>
        <taxon>Nostocales</taxon>
        <taxon>Nostocaceae</taxon>
        <taxon>Nostoc</taxon>
    </lineage>
</organism>
<sequence length="182" mass="19180">MPLDFNEIRQLLTTIAQTDIAEVTLKSDDFELTVRKAVGVNNSVVPVVTAPLSGVVGSGLPSAIPIVAHAAPSPSPEPGTSRAADHAVTSSGSQPGAKIIDQKLAEVASPMVGTFYRAPAPGEAVFVEVGDRIRQGQTVCIIEAMKLMNEIEADVSGQVIEILVQNGEPVEYNQPLMRIKPD</sequence>
<comment type="function">
    <text>This protein is a component of the acetyl coenzyme A carboxylase complex; first, biotin carboxylase catalyzes the carboxylation of the carrier protein and then the transcarboxylase transfers the carboxyl group to form malonyl-CoA.</text>
</comment>
<comment type="pathway">
    <text>Lipid metabolism; fatty acid biosynthesis.</text>
</comment>
<comment type="subunit">
    <text>Homodimer.</text>
</comment>
<protein>
    <recommendedName>
        <fullName>Biotin carboxyl carrier protein of acetyl-CoA carboxylase</fullName>
        <shortName>BCCP</shortName>
    </recommendedName>
</protein>
<keyword id="KW-0092">Biotin</keyword>
<keyword id="KW-0903">Direct protein sequencing</keyword>
<keyword id="KW-0275">Fatty acid biosynthesis</keyword>
<keyword id="KW-0276">Fatty acid metabolism</keyword>
<keyword id="KW-0444">Lipid biosynthesis</keyword>
<keyword id="KW-0443">Lipid metabolism</keyword>
<keyword id="KW-1185">Reference proteome</keyword>
<dbReference type="EMBL" id="L14863">
    <property type="protein sequence ID" value="AAA74628.1"/>
    <property type="molecule type" value="Genomic_DNA"/>
</dbReference>
<dbReference type="EMBL" id="BA000019">
    <property type="protein sequence ID" value="BAB76756.1"/>
    <property type="molecule type" value="Genomic_DNA"/>
</dbReference>
<dbReference type="PIR" id="AI2437">
    <property type="entry name" value="AI2437"/>
</dbReference>
<dbReference type="PIR" id="B53311">
    <property type="entry name" value="B53311"/>
</dbReference>
<dbReference type="RefSeq" id="WP_010999183.1">
    <property type="nucleotide sequence ID" value="NZ_RSCN01000014.1"/>
</dbReference>
<dbReference type="SMR" id="Q06881"/>
<dbReference type="STRING" id="103690.gene:10497115"/>
<dbReference type="KEGG" id="ana:all5057"/>
<dbReference type="eggNOG" id="COG0511">
    <property type="taxonomic scope" value="Bacteria"/>
</dbReference>
<dbReference type="OrthoDB" id="9811735at2"/>
<dbReference type="UniPathway" id="UPA00094"/>
<dbReference type="Proteomes" id="UP000002483">
    <property type="component" value="Chromosome"/>
</dbReference>
<dbReference type="GO" id="GO:0009317">
    <property type="term" value="C:acetyl-CoA carboxylase complex"/>
    <property type="evidence" value="ECO:0007669"/>
    <property type="project" value="InterPro"/>
</dbReference>
<dbReference type="GO" id="GO:0003989">
    <property type="term" value="F:acetyl-CoA carboxylase activity"/>
    <property type="evidence" value="ECO:0007669"/>
    <property type="project" value="InterPro"/>
</dbReference>
<dbReference type="GO" id="GO:0006633">
    <property type="term" value="P:fatty acid biosynthetic process"/>
    <property type="evidence" value="ECO:0007669"/>
    <property type="project" value="UniProtKB-UniPathway"/>
</dbReference>
<dbReference type="CDD" id="cd06850">
    <property type="entry name" value="biotinyl_domain"/>
    <property type="match status" value="1"/>
</dbReference>
<dbReference type="FunFam" id="2.40.50.100:FF:000003">
    <property type="entry name" value="Acetyl-CoA carboxylase biotin carboxyl carrier protein"/>
    <property type="match status" value="1"/>
</dbReference>
<dbReference type="Gene3D" id="2.40.50.100">
    <property type="match status" value="1"/>
</dbReference>
<dbReference type="InterPro" id="IPR053217">
    <property type="entry name" value="ACC_Biotin_Carrier"/>
</dbReference>
<dbReference type="InterPro" id="IPR001249">
    <property type="entry name" value="AcCoA_biotinCC"/>
</dbReference>
<dbReference type="InterPro" id="IPR001882">
    <property type="entry name" value="Biotin_BS"/>
</dbReference>
<dbReference type="InterPro" id="IPR000089">
    <property type="entry name" value="Biotin_lipoyl"/>
</dbReference>
<dbReference type="InterPro" id="IPR011053">
    <property type="entry name" value="Single_hybrid_motif"/>
</dbReference>
<dbReference type="NCBIfam" id="TIGR00531">
    <property type="entry name" value="BCCP"/>
    <property type="match status" value="1"/>
</dbReference>
<dbReference type="NCBIfam" id="NF005457">
    <property type="entry name" value="PRK07051.1"/>
    <property type="match status" value="1"/>
</dbReference>
<dbReference type="PANTHER" id="PTHR47597">
    <property type="entry name" value="IS A MEMBER OF THE PF|00364 BIOTIN-REQUIRING ENZYMES FAMILY-RELATED"/>
    <property type="match status" value="1"/>
</dbReference>
<dbReference type="PANTHER" id="PTHR47597:SF1">
    <property type="entry name" value="IS A MEMBER OF THE PF|00364 BIOTIN-REQUIRING ENZYMES FAMILY-RELATED"/>
    <property type="match status" value="1"/>
</dbReference>
<dbReference type="Pfam" id="PF00364">
    <property type="entry name" value="Biotin_lipoyl"/>
    <property type="match status" value="1"/>
</dbReference>
<dbReference type="PRINTS" id="PR01071">
    <property type="entry name" value="ACOABIOTINCC"/>
</dbReference>
<dbReference type="SUPFAM" id="SSF51230">
    <property type="entry name" value="Single hybrid motif"/>
    <property type="match status" value="1"/>
</dbReference>
<dbReference type="PROSITE" id="PS00188">
    <property type="entry name" value="BIOTIN"/>
    <property type="match status" value="1"/>
</dbReference>
<dbReference type="PROSITE" id="PS50968">
    <property type="entry name" value="BIOTINYL_LIPOYL"/>
    <property type="match status" value="1"/>
</dbReference>
<gene>
    <name type="primary">accB</name>
    <name type="ordered locus">all5057</name>
</gene>
<feature type="initiator methionine" description="Removed" evidence="4">
    <location>
        <position position="1"/>
    </location>
</feature>
<feature type="chain" id="PRO_0000146800" description="Biotin carboxyl carrier protein of acetyl-CoA carboxylase">
    <location>
        <begin position="2"/>
        <end position="182"/>
    </location>
</feature>
<feature type="domain" description="Biotinyl-binding" evidence="2">
    <location>
        <begin position="104"/>
        <end position="180"/>
    </location>
</feature>
<feature type="region of interest" description="Disordered" evidence="3">
    <location>
        <begin position="70"/>
        <end position="95"/>
    </location>
</feature>
<feature type="modified residue" description="N6-biotinyllysine" evidence="1 2">
    <location>
        <position position="146"/>
    </location>
</feature>
<name>BCCP_NOSS1</name>
<evidence type="ECO:0000250" key="1"/>
<evidence type="ECO:0000255" key="2">
    <source>
        <dbReference type="PROSITE-ProRule" id="PRU01066"/>
    </source>
</evidence>
<evidence type="ECO:0000256" key="3">
    <source>
        <dbReference type="SAM" id="MobiDB-lite"/>
    </source>
</evidence>
<evidence type="ECO:0000269" key="4">
    <source>
    </source>
</evidence>
<reference key="1">
    <citation type="journal article" date="1993" name="J. Bacteriol.">
        <title>Genes for two subunits of acetyl coenzyme A carboxylase of Anabaena sp. strain PCC 7120: biotin carboxylase and biotin carboxyl carrier protein.</title>
        <authorList>
            <person name="Gornicki P."/>
            <person name="Scappino L.A."/>
            <person name="Haselkorn R."/>
        </authorList>
    </citation>
    <scope>NUCLEOTIDE SEQUENCE [GENOMIC DNA]</scope>
    <scope>PROTEIN SEQUENCE OF 2-10</scope>
</reference>
<reference key="2">
    <citation type="journal article" date="2001" name="DNA Res.">
        <title>Complete genomic sequence of the filamentous nitrogen-fixing cyanobacterium Anabaena sp. strain PCC 7120.</title>
        <authorList>
            <person name="Kaneko T."/>
            <person name="Nakamura Y."/>
            <person name="Wolk C.P."/>
            <person name="Kuritz T."/>
            <person name="Sasamoto S."/>
            <person name="Watanabe A."/>
            <person name="Iriguchi M."/>
            <person name="Ishikawa A."/>
            <person name="Kawashima K."/>
            <person name="Kimura T."/>
            <person name="Kishida Y."/>
            <person name="Kohara M."/>
            <person name="Matsumoto M."/>
            <person name="Matsuno A."/>
            <person name="Muraki A."/>
            <person name="Nakazaki N."/>
            <person name="Shimpo S."/>
            <person name="Sugimoto M."/>
            <person name="Takazawa M."/>
            <person name="Yamada M."/>
            <person name="Yasuda M."/>
            <person name="Tabata S."/>
        </authorList>
    </citation>
    <scope>NUCLEOTIDE SEQUENCE [LARGE SCALE GENOMIC DNA]</scope>
    <source>
        <strain>PCC 7120 / SAG 25.82 / UTEX 2576</strain>
    </source>
</reference>
<accession>Q06881</accession>